<accession>Q9YKL8</accession>
<organism>
    <name type="scientific">Rotavirus A (isolate RVA/Dog/United States/K9/1981/G3P5A[3])</name>
    <name type="common">RV-A</name>
    <dbReference type="NCBI Taxonomy" id="557232"/>
    <lineage>
        <taxon>Viruses</taxon>
        <taxon>Riboviria</taxon>
        <taxon>Orthornavirae</taxon>
        <taxon>Duplornaviricota</taxon>
        <taxon>Resentoviricetes</taxon>
        <taxon>Reovirales</taxon>
        <taxon>Sedoreoviridae</taxon>
        <taxon>Rotavirus</taxon>
        <taxon>Rotavirus A</taxon>
    </lineage>
</organism>
<dbReference type="EMBL" id="AF111946">
    <property type="protein sequence ID" value="AAD20225.1"/>
    <property type="molecule type" value="Genomic_RNA"/>
</dbReference>
<dbReference type="GO" id="GO:0030430">
    <property type="term" value="C:host cell cytoplasm"/>
    <property type="evidence" value="ECO:0007669"/>
    <property type="project" value="UniProtKB-UniRule"/>
</dbReference>
<dbReference type="GO" id="GO:0044163">
    <property type="term" value="C:host cytoskeleton"/>
    <property type="evidence" value="ECO:0007669"/>
    <property type="project" value="UniProtKB-SubCell"/>
</dbReference>
<dbReference type="GO" id="GO:0046872">
    <property type="term" value="F:metal ion binding"/>
    <property type="evidence" value="ECO:0007669"/>
    <property type="project" value="UniProtKB-UniRule"/>
</dbReference>
<dbReference type="GO" id="GO:0003723">
    <property type="term" value="F:RNA binding"/>
    <property type="evidence" value="ECO:0007669"/>
    <property type="project" value="UniProtKB-UniRule"/>
</dbReference>
<dbReference type="GO" id="GO:0039548">
    <property type="term" value="P:symbiont-mediated suppression of host cytoplasmic pattern recognition receptor signaling pathway via inhibition of IRF3 activity"/>
    <property type="evidence" value="ECO:0007669"/>
    <property type="project" value="UniProtKB-UniRule"/>
</dbReference>
<dbReference type="GO" id="GO:0039557">
    <property type="term" value="P:symbiont-mediated suppression of host cytoplasmic pattern recognition receptor signaling pathway via inhibition of IRF7 activity"/>
    <property type="evidence" value="ECO:0007669"/>
    <property type="project" value="UniProtKB-UniRule"/>
</dbReference>
<dbReference type="HAMAP" id="MF_04088">
    <property type="entry name" value="ROTA_NSP1"/>
    <property type="match status" value="1"/>
</dbReference>
<dbReference type="InterPro" id="IPR002148">
    <property type="entry name" value="Rotavirus_NSP1"/>
</dbReference>
<dbReference type="Pfam" id="PF00981">
    <property type="entry name" value="Rota_NS53"/>
    <property type="match status" value="1"/>
</dbReference>
<comment type="function">
    <text evidence="1">Plays a role in the inhibition of host innate immunity by inducing the degradation of key host factors required to activate interferon production such as IRF3, IRF5 or IRF7. Associates with components of cullin RING ligases (CRLs) including CUL1 or CUL3, which are essential multisubunit ubiquitination complexes, to modulate their activities.</text>
</comment>
<comment type="subunit">
    <text evidence="1">Interacts (via C-terminus) with host IRF3; this interaction leads to IRF3 degradation. Interacts with host IRF7; this interaction leads to IRF7 degradation. Interacts with host CUL1 and CUL3.</text>
</comment>
<comment type="subcellular location">
    <subcellularLocation>
        <location evidence="1">Host cytoplasm</location>
        <location evidence="1">Host cytoskeleton</location>
    </subcellularLocation>
</comment>
<comment type="domain">
    <text evidence="1">The integrity of the zinc-binding domain in NSP1 is important for degradation of host IRF3.</text>
</comment>
<comment type="domain">
    <text evidence="1">The pLxIS motif targets host IRF3 for degradation; however phosphorylation of NSP1 pLxIS motif is not required for its activity.</text>
</comment>
<comment type="similarity">
    <text evidence="1">Belongs to the rotavirus NSP1 family.</text>
</comment>
<protein>
    <recommendedName>
        <fullName evidence="1">Non-structural protein 1</fullName>
        <shortName evidence="1">NSP1</shortName>
    </recommendedName>
    <alternativeName>
        <fullName evidence="1">NCVP2</fullName>
    </alternativeName>
    <alternativeName>
        <fullName evidence="1">Non-structural RNA-binding protein 53</fullName>
        <shortName evidence="1">NS53</shortName>
    </alternativeName>
</protein>
<organismHost>
    <name type="scientific">Canis lupus familiaris</name>
    <name type="common">Dog</name>
    <name type="synonym">Canis familiaris</name>
    <dbReference type="NCBI Taxonomy" id="9615"/>
</organismHost>
<feature type="chain" id="PRO_0000369070" description="Non-structural protein 1">
    <location>
        <begin position="1"/>
        <end position="493"/>
    </location>
</feature>
<feature type="region of interest" description="RNA-binding" evidence="1">
    <location>
        <begin position="1"/>
        <end position="81"/>
    </location>
</feature>
<feature type="region of interest" description="Zinc-binding domain" evidence="1">
    <location>
        <begin position="42"/>
        <end position="79"/>
    </location>
</feature>
<feature type="region of interest" description="Important for cytoskeleton localization" evidence="1">
    <location>
        <begin position="82"/>
        <end position="176"/>
    </location>
</feature>
<feature type="region of interest" description="Interaction with host IRF3" evidence="1">
    <location>
        <begin position="318"/>
        <end position="493"/>
    </location>
</feature>
<feature type="short sequence motif" description="pLxIS motif" evidence="1">
    <location>
        <begin position="483"/>
        <end position="486"/>
    </location>
</feature>
<keyword id="KW-1035">Host cytoplasm</keyword>
<keyword id="KW-1037">Host cytoskeleton</keyword>
<keyword id="KW-0945">Host-virus interaction</keyword>
<keyword id="KW-1090">Inhibition of host innate immune response by virus</keyword>
<keyword id="KW-1092">Inhibition of host IRF3 by virus</keyword>
<keyword id="KW-1093">Inhibition of host IRF7 by virus</keyword>
<keyword id="KW-1113">Inhibition of host RLR pathway by virus</keyword>
<keyword id="KW-0922">Interferon antiviral system evasion</keyword>
<keyword id="KW-0479">Metal-binding</keyword>
<keyword id="KW-0694">RNA-binding</keyword>
<keyword id="KW-0899">Viral immunoevasion</keyword>
<proteinExistence type="inferred from homology"/>
<evidence type="ECO:0000255" key="1">
    <source>
        <dbReference type="HAMAP-Rule" id="MF_04088"/>
    </source>
</evidence>
<sequence>MATFKDACFHYRKITKLNRELLRIGANSVWIPVSSNKIKGWCIECCQLTELTFCHGCSLAHVCQWCIQNKRCFLDNEPHLLKLRTFESPITKEKLQCIIDLYNLLFPINPGIINRFKKIVNQRKCRNEFEQSWYNQLLFPITLNAAVFKFHSREVYVFGLYEGSSSCINLPYRIVNCIDLYDRLLLDQINFERMSSLPASLQSVYANKYFKLSRLPSMKLKQIYYSDFSKQNLINKCKIKSRIVLRNLTEFTWDSQISLHYDVINNREKILTALSTSSLKRFETHDLNLGRIKADIFELGHHCKPNFISSNHWQPASNVSQCRWCNVKYVFRNMDWKMESMYNELLSFIQACYKSNVNVGNCSSIENAYPLVKDMIWHSITKYIDQTIEKLFNVMNPVEVDGQQVISFHWQIDVALYIHIKMILKTETLPFALTLYQFGSIIKGIVNQWYDVTELDYLPLCTEQTDKLVKLEEEGKISEEYELLISDSEDDDQ</sequence>
<name>NSP1_ROTD9</name>
<reference key="1">
    <citation type="journal article" date="1999" name="Arch. Virol.">
        <title>Functional analysis of the heterologous NSP1 genes in the genetic background of simian rotavirus SA11.</title>
        <authorList>
            <person name="Okada J."/>
            <person name="Kobayashi N."/>
            <person name="Taniguchi K."/>
            <person name="Shiomi H."/>
        </authorList>
    </citation>
    <scope>NUCLEOTIDE SEQUENCE [GENOMIC RNA]</scope>
</reference>